<reference key="1">
    <citation type="journal article" date="1999" name="Nature">
        <title>Sequence and analysis of chromosome 4 of the plant Arabidopsis thaliana.</title>
        <authorList>
            <person name="Mayer K.F.X."/>
            <person name="Schueller C."/>
            <person name="Wambutt R."/>
            <person name="Murphy G."/>
            <person name="Volckaert G."/>
            <person name="Pohl T."/>
            <person name="Duesterhoeft A."/>
            <person name="Stiekema W."/>
            <person name="Entian K.-D."/>
            <person name="Terryn N."/>
            <person name="Harris B."/>
            <person name="Ansorge W."/>
            <person name="Brandt P."/>
            <person name="Grivell L.A."/>
            <person name="Rieger M."/>
            <person name="Weichselgartner M."/>
            <person name="de Simone V."/>
            <person name="Obermaier B."/>
            <person name="Mache R."/>
            <person name="Mueller M."/>
            <person name="Kreis M."/>
            <person name="Delseny M."/>
            <person name="Puigdomenech P."/>
            <person name="Watson M."/>
            <person name="Schmidtheini T."/>
            <person name="Reichert B."/>
            <person name="Portetelle D."/>
            <person name="Perez-Alonso M."/>
            <person name="Boutry M."/>
            <person name="Bancroft I."/>
            <person name="Vos P."/>
            <person name="Hoheisel J."/>
            <person name="Zimmermann W."/>
            <person name="Wedler H."/>
            <person name="Ridley P."/>
            <person name="Langham S.-A."/>
            <person name="McCullagh B."/>
            <person name="Bilham L."/>
            <person name="Robben J."/>
            <person name="van der Schueren J."/>
            <person name="Grymonprez B."/>
            <person name="Chuang Y.-J."/>
            <person name="Vandenbussche F."/>
            <person name="Braeken M."/>
            <person name="Weltjens I."/>
            <person name="Voet M."/>
            <person name="Bastiaens I."/>
            <person name="Aert R."/>
            <person name="Defoor E."/>
            <person name="Weitzenegger T."/>
            <person name="Bothe G."/>
            <person name="Ramsperger U."/>
            <person name="Hilbert H."/>
            <person name="Braun M."/>
            <person name="Holzer E."/>
            <person name="Brandt A."/>
            <person name="Peters S."/>
            <person name="van Staveren M."/>
            <person name="Dirkse W."/>
            <person name="Mooijman P."/>
            <person name="Klein Lankhorst R."/>
            <person name="Rose M."/>
            <person name="Hauf J."/>
            <person name="Koetter P."/>
            <person name="Berneiser S."/>
            <person name="Hempel S."/>
            <person name="Feldpausch M."/>
            <person name="Lamberth S."/>
            <person name="Van den Daele H."/>
            <person name="De Keyser A."/>
            <person name="Buysshaert C."/>
            <person name="Gielen J."/>
            <person name="Villarroel R."/>
            <person name="De Clercq R."/>
            <person name="van Montagu M."/>
            <person name="Rogers J."/>
            <person name="Cronin A."/>
            <person name="Quail M.A."/>
            <person name="Bray-Allen S."/>
            <person name="Clark L."/>
            <person name="Doggett J."/>
            <person name="Hall S."/>
            <person name="Kay M."/>
            <person name="Lennard N."/>
            <person name="McLay K."/>
            <person name="Mayes R."/>
            <person name="Pettett A."/>
            <person name="Rajandream M.A."/>
            <person name="Lyne M."/>
            <person name="Benes V."/>
            <person name="Rechmann S."/>
            <person name="Borkova D."/>
            <person name="Bloecker H."/>
            <person name="Scharfe M."/>
            <person name="Grimm M."/>
            <person name="Loehnert T.-H."/>
            <person name="Dose S."/>
            <person name="de Haan M."/>
            <person name="Maarse A.C."/>
            <person name="Schaefer M."/>
            <person name="Mueller-Auer S."/>
            <person name="Gabel C."/>
            <person name="Fuchs M."/>
            <person name="Fartmann B."/>
            <person name="Granderath K."/>
            <person name="Dauner D."/>
            <person name="Herzl A."/>
            <person name="Neumann S."/>
            <person name="Argiriou A."/>
            <person name="Vitale D."/>
            <person name="Liguori R."/>
            <person name="Piravandi E."/>
            <person name="Massenet O."/>
            <person name="Quigley F."/>
            <person name="Clabauld G."/>
            <person name="Muendlein A."/>
            <person name="Felber R."/>
            <person name="Schnabl S."/>
            <person name="Hiller R."/>
            <person name="Schmidt W."/>
            <person name="Lecharny A."/>
            <person name="Aubourg S."/>
            <person name="Chefdor F."/>
            <person name="Cooke R."/>
            <person name="Berger C."/>
            <person name="Monfort A."/>
            <person name="Casacuberta E."/>
            <person name="Gibbons T."/>
            <person name="Weber N."/>
            <person name="Vandenbol M."/>
            <person name="Bargues M."/>
            <person name="Terol J."/>
            <person name="Torres A."/>
            <person name="Perez-Perez A."/>
            <person name="Purnelle B."/>
            <person name="Bent E."/>
            <person name="Johnson S."/>
            <person name="Tacon D."/>
            <person name="Jesse T."/>
            <person name="Heijnen L."/>
            <person name="Schwarz S."/>
            <person name="Scholler P."/>
            <person name="Heber S."/>
            <person name="Francs P."/>
            <person name="Bielke C."/>
            <person name="Frishman D."/>
            <person name="Haase D."/>
            <person name="Lemcke K."/>
            <person name="Mewes H.-W."/>
            <person name="Stocker S."/>
            <person name="Zaccaria P."/>
            <person name="Bevan M."/>
            <person name="Wilson R.K."/>
            <person name="de la Bastide M."/>
            <person name="Habermann K."/>
            <person name="Parnell L."/>
            <person name="Dedhia N."/>
            <person name="Gnoj L."/>
            <person name="Schutz K."/>
            <person name="Huang E."/>
            <person name="Spiegel L."/>
            <person name="Sekhon M."/>
            <person name="Murray J."/>
            <person name="Sheet P."/>
            <person name="Cordes M."/>
            <person name="Abu-Threideh J."/>
            <person name="Stoneking T."/>
            <person name="Kalicki J."/>
            <person name="Graves T."/>
            <person name="Harmon G."/>
            <person name="Edwards J."/>
            <person name="Latreille P."/>
            <person name="Courtney L."/>
            <person name="Cloud J."/>
            <person name="Abbott A."/>
            <person name="Scott K."/>
            <person name="Johnson D."/>
            <person name="Minx P."/>
            <person name="Bentley D."/>
            <person name="Fulton B."/>
            <person name="Miller N."/>
            <person name="Greco T."/>
            <person name="Kemp K."/>
            <person name="Kramer J."/>
            <person name="Fulton L."/>
            <person name="Mardis E."/>
            <person name="Dante M."/>
            <person name="Pepin K."/>
            <person name="Hillier L.W."/>
            <person name="Nelson J."/>
            <person name="Spieth J."/>
            <person name="Ryan E."/>
            <person name="Andrews S."/>
            <person name="Geisel C."/>
            <person name="Layman D."/>
            <person name="Du H."/>
            <person name="Ali J."/>
            <person name="Berghoff A."/>
            <person name="Jones K."/>
            <person name="Drone K."/>
            <person name="Cotton M."/>
            <person name="Joshu C."/>
            <person name="Antonoiu B."/>
            <person name="Zidanic M."/>
            <person name="Strong C."/>
            <person name="Sun H."/>
            <person name="Lamar B."/>
            <person name="Yordan C."/>
            <person name="Ma P."/>
            <person name="Zhong J."/>
            <person name="Preston R."/>
            <person name="Vil D."/>
            <person name="Shekher M."/>
            <person name="Matero A."/>
            <person name="Shah R."/>
            <person name="Swaby I.K."/>
            <person name="O'Shaughnessy A."/>
            <person name="Rodriguez M."/>
            <person name="Hoffman J."/>
            <person name="Till S."/>
            <person name="Granat S."/>
            <person name="Shohdy N."/>
            <person name="Hasegawa A."/>
            <person name="Hameed A."/>
            <person name="Lodhi M."/>
            <person name="Johnson A."/>
            <person name="Chen E."/>
            <person name="Marra M.A."/>
            <person name="Martienssen R."/>
            <person name="McCombie W.R."/>
        </authorList>
    </citation>
    <scope>NUCLEOTIDE SEQUENCE [LARGE SCALE GENOMIC DNA]</scope>
    <source>
        <strain>cv. Columbia</strain>
    </source>
</reference>
<reference key="2">
    <citation type="journal article" date="2017" name="Plant J.">
        <title>Araport11: a complete reannotation of the Arabidopsis thaliana reference genome.</title>
        <authorList>
            <person name="Cheng C.Y."/>
            <person name="Krishnakumar V."/>
            <person name="Chan A.P."/>
            <person name="Thibaud-Nissen F."/>
            <person name="Schobel S."/>
            <person name="Town C.D."/>
        </authorList>
    </citation>
    <scope>GENOME REANNOTATION</scope>
    <source>
        <strain>cv. Columbia</strain>
    </source>
</reference>
<reference key="3">
    <citation type="journal article" date="2003" name="Science">
        <title>Empirical analysis of transcriptional activity in the Arabidopsis genome.</title>
        <authorList>
            <person name="Yamada K."/>
            <person name="Lim J."/>
            <person name="Dale J.M."/>
            <person name="Chen H."/>
            <person name="Shinn P."/>
            <person name="Palm C.J."/>
            <person name="Southwick A.M."/>
            <person name="Wu H.C."/>
            <person name="Kim C.J."/>
            <person name="Nguyen M."/>
            <person name="Pham P.K."/>
            <person name="Cheuk R.F."/>
            <person name="Karlin-Newmann G."/>
            <person name="Liu S.X."/>
            <person name="Lam B."/>
            <person name="Sakano H."/>
            <person name="Wu T."/>
            <person name="Yu G."/>
            <person name="Miranda M."/>
            <person name="Quach H.L."/>
            <person name="Tripp M."/>
            <person name="Chang C.H."/>
            <person name="Lee J.M."/>
            <person name="Toriumi M.J."/>
            <person name="Chan M.M."/>
            <person name="Tang C.C."/>
            <person name="Onodera C.S."/>
            <person name="Deng J.M."/>
            <person name="Akiyama K."/>
            <person name="Ansari Y."/>
            <person name="Arakawa T."/>
            <person name="Banh J."/>
            <person name="Banno F."/>
            <person name="Bowser L."/>
            <person name="Brooks S.Y."/>
            <person name="Carninci P."/>
            <person name="Chao Q."/>
            <person name="Choy N."/>
            <person name="Enju A."/>
            <person name="Goldsmith A.D."/>
            <person name="Gurjal M."/>
            <person name="Hansen N.F."/>
            <person name="Hayashizaki Y."/>
            <person name="Johnson-Hopson C."/>
            <person name="Hsuan V.W."/>
            <person name="Iida K."/>
            <person name="Karnes M."/>
            <person name="Khan S."/>
            <person name="Koesema E."/>
            <person name="Ishida J."/>
            <person name="Jiang P.X."/>
            <person name="Jones T."/>
            <person name="Kawai J."/>
            <person name="Kamiya A."/>
            <person name="Meyers C."/>
            <person name="Nakajima M."/>
            <person name="Narusaka M."/>
            <person name="Seki M."/>
            <person name="Sakurai T."/>
            <person name="Satou M."/>
            <person name="Tamse R."/>
            <person name="Vaysberg M."/>
            <person name="Wallender E.K."/>
            <person name="Wong C."/>
            <person name="Yamamura Y."/>
            <person name="Yuan S."/>
            <person name="Shinozaki K."/>
            <person name="Davis R.W."/>
            <person name="Theologis A."/>
            <person name="Ecker J.R."/>
        </authorList>
    </citation>
    <scope>NUCLEOTIDE SEQUENCE [LARGE SCALE MRNA]</scope>
    <source>
        <strain>cv. Columbia</strain>
    </source>
</reference>
<reference key="4">
    <citation type="journal article" date="2018" name="Plant Cell">
        <title>m6A RNA degradation products are catabolized by an evolutionarily conserved N6-methyl-AMP deaminase in plant and mammalian cells.</title>
        <authorList>
            <person name="Chen M."/>
            <person name="Urs M.J."/>
            <person name="Sanchez-Gonzalez I."/>
            <person name="Olayioye M.A."/>
            <person name="Herde M."/>
            <person name="Witte C.P."/>
        </authorList>
    </citation>
    <scope>FUNCTION</scope>
    <scope>CATALYTIC ACTIVITY</scope>
    <scope>COFACTOR</scope>
    <scope>BIOPHYSICOCHEMICAL PROPERTIES</scope>
    <scope>SUBCELLULAR LOCATION</scope>
    <scope>MUTAGENESIS OF VAL-57</scope>
    <scope>DISRUPTION PHENOTYPE</scope>
</reference>
<reference key="5">
    <citation type="journal article" date="2019" name="Nucleic Acids Res.">
        <title>Alternative conformation induced by substrate binding for Arabidopsis thaliana N6-methyl-AMP deaminase.</title>
        <authorList>
            <person name="Jia Q."/>
            <person name="Xie W."/>
        </authorList>
    </citation>
    <scope>X-RAY CRYSTALLOGRAPHY (1.66 ANGSTROMS) IN COMPLEX WITH N(6)-METHYL-AMP AND ZINC ION</scope>
    <scope>FUNCTION</scope>
    <scope>SUBUNIT</scope>
    <scope>MUTAGENESIS OF HIS-15; ASN-17; HIS-65; THR-97; THR-98; LYS-100; GLU-220; ASP-295 AND ASP-296</scope>
</reference>
<reference key="6">
    <citation type="journal article" date="2019" name="RNA Biol.">
        <title>Structure of Arabidopsis thaliana N6-methyl-AMP deaminase ADAL with bound GMP and IMP and implications for N6-methyl-AMP recognition and processing.</title>
        <authorList>
            <person name="Wu B."/>
            <person name="Zhang D."/>
            <person name="Nie H."/>
            <person name="Shen S."/>
            <person name="Li Y."/>
            <person name="Li S."/>
        </authorList>
    </citation>
    <scope>X-RAY CRYSTALLOGRAPHY (1.75 ANGSTROMS) IN COMPLEX WITH N(6)-METHYL-AMP AND ZINC ION</scope>
    <scope>FUNCTION</scope>
    <scope>MUTAGENESIS OF ASP-295</scope>
</reference>
<dbReference type="EC" id="3.5.4.-" evidence="2"/>
<dbReference type="EMBL" id="AL161501">
    <property type="protein sequence ID" value="CAB80853.1"/>
    <property type="status" value="ALT_SEQ"/>
    <property type="molecule type" value="Genomic_DNA"/>
</dbReference>
<dbReference type="EMBL" id="CP002687">
    <property type="protein sequence ID" value="AEE82436.1"/>
    <property type="molecule type" value="Genomic_DNA"/>
</dbReference>
<dbReference type="EMBL" id="AY099563">
    <property type="protein sequence ID" value="AAM20415.1"/>
    <property type="molecule type" value="mRNA"/>
</dbReference>
<dbReference type="EMBL" id="BT001246">
    <property type="protein sequence ID" value="AAN65133.1"/>
    <property type="molecule type" value="mRNA"/>
</dbReference>
<dbReference type="PIR" id="D85061">
    <property type="entry name" value="D85061"/>
</dbReference>
<dbReference type="RefSeq" id="NP_192397.2">
    <property type="nucleotide sequence ID" value="NM_116726.4"/>
</dbReference>
<dbReference type="PDB" id="6IJM">
    <property type="method" value="X-ray"/>
    <property type="resolution" value="2.02 A"/>
    <property type="chains" value="A=1-355"/>
</dbReference>
<dbReference type="PDB" id="6IJN">
    <property type="method" value="X-ray"/>
    <property type="resolution" value="1.66 A"/>
    <property type="chains" value="A=1-355"/>
</dbReference>
<dbReference type="PDB" id="6IJP">
    <property type="method" value="X-ray"/>
    <property type="resolution" value="1.85 A"/>
    <property type="chains" value="A=1-355"/>
</dbReference>
<dbReference type="PDB" id="6IV5">
    <property type="method" value="X-ray"/>
    <property type="resolution" value="1.75 A"/>
    <property type="chains" value="A=1-355"/>
</dbReference>
<dbReference type="PDB" id="6J23">
    <property type="method" value="X-ray"/>
    <property type="resolution" value="1.90 A"/>
    <property type="chains" value="A=1-355"/>
</dbReference>
<dbReference type="PDB" id="6J4T">
    <property type="method" value="X-ray"/>
    <property type="resolution" value="1.82 A"/>
    <property type="chains" value="A=1-355"/>
</dbReference>
<dbReference type="PDBsum" id="6IJM"/>
<dbReference type="PDBsum" id="6IJN"/>
<dbReference type="PDBsum" id="6IJP"/>
<dbReference type="PDBsum" id="6IV5"/>
<dbReference type="PDBsum" id="6J23"/>
<dbReference type="PDBsum" id="6J4T"/>
<dbReference type="SMR" id="Q8LPL7"/>
<dbReference type="FunCoup" id="Q8LPL7">
    <property type="interactions" value="2881"/>
</dbReference>
<dbReference type="STRING" id="3702.Q8LPL7"/>
<dbReference type="iPTMnet" id="Q8LPL7"/>
<dbReference type="PaxDb" id="3702-AT4G04880.1"/>
<dbReference type="ProteomicsDB" id="181029"/>
<dbReference type="EnsemblPlants" id="AT4G04880.1">
    <property type="protein sequence ID" value="AT4G04880.1"/>
    <property type="gene ID" value="AT4G04880"/>
</dbReference>
<dbReference type="GeneID" id="825826"/>
<dbReference type="Gramene" id="AT4G04880.1">
    <property type="protein sequence ID" value="AT4G04880.1"/>
    <property type="gene ID" value="AT4G04880"/>
</dbReference>
<dbReference type="KEGG" id="ath:AT4G04880"/>
<dbReference type="Araport" id="AT4G04880"/>
<dbReference type="TAIR" id="AT4G04880">
    <property type="gene designation" value="MAPDA"/>
</dbReference>
<dbReference type="eggNOG" id="KOG1097">
    <property type="taxonomic scope" value="Eukaryota"/>
</dbReference>
<dbReference type="HOGENOM" id="CLU_039228_3_0_1"/>
<dbReference type="InParanoid" id="Q8LPL7"/>
<dbReference type="OMA" id="RPQFKPY"/>
<dbReference type="PhylomeDB" id="Q8LPL7"/>
<dbReference type="SABIO-RK" id="Q8LPL7"/>
<dbReference type="PRO" id="PR:Q8LPL7"/>
<dbReference type="Proteomes" id="UP000006548">
    <property type="component" value="Chromosome 4"/>
</dbReference>
<dbReference type="ExpressionAtlas" id="Q8LPL7">
    <property type="expression patterns" value="baseline and differential"/>
</dbReference>
<dbReference type="GO" id="GO:0005829">
    <property type="term" value="C:cytosol"/>
    <property type="evidence" value="ECO:0000314"/>
    <property type="project" value="TAIR"/>
</dbReference>
<dbReference type="GO" id="GO:0019239">
    <property type="term" value="F:deaminase activity"/>
    <property type="evidence" value="ECO:0000315"/>
    <property type="project" value="TAIR"/>
</dbReference>
<dbReference type="GO" id="GO:0046872">
    <property type="term" value="F:metal ion binding"/>
    <property type="evidence" value="ECO:0007669"/>
    <property type="project" value="UniProtKB-KW"/>
</dbReference>
<dbReference type="GO" id="GO:0062154">
    <property type="term" value="F:N6-methyl-AMP deaminase activity"/>
    <property type="evidence" value="ECO:0000314"/>
    <property type="project" value="TAIR"/>
</dbReference>
<dbReference type="GO" id="GO:0009117">
    <property type="term" value="P:nucleotide metabolic process"/>
    <property type="evidence" value="ECO:0007669"/>
    <property type="project" value="UniProtKB-KW"/>
</dbReference>
<dbReference type="GO" id="GO:0006401">
    <property type="term" value="P:RNA catabolic process"/>
    <property type="evidence" value="ECO:0000315"/>
    <property type="project" value="TAIR"/>
</dbReference>
<dbReference type="CDD" id="cd00443">
    <property type="entry name" value="ADA_AMPD"/>
    <property type="match status" value="1"/>
</dbReference>
<dbReference type="FunFam" id="3.20.20.140:FF:000050">
    <property type="entry name" value="Adenosine/AMP deaminase family protein"/>
    <property type="match status" value="1"/>
</dbReference>
<dbReference type="Gene3D" id="3.20.20.140">
    <property type="entry name" value="Metal-dependent hydrolases"/>
    <property type="match status" value="1"/>
</dbReference>
<dbReference type="InterPro" id="IPR001365">
    <property type="entry name" value="A_deaminase_dom"/>
</dbReference>
<dbReference type="InterPro" id="IPR006330">
    <property type="entry name" value="Ado/ade_deaminase"/>
</dbReference>
<dbReference type="InterPro" id="IPR032466">
    <property type="entry name" value="Metal_Hydrolase"/>
</dbReference>
<dbReference type="PANTHER" id="PTHR11409">
    <property type="entry name" value="ADENOSINE DEAMINASE"/>
    <property type="match status" value="1"/>
</dbReference>
<dbReference type="PANTHER" id="PTHR11409:SF42">
    <property type="entry name" value="ADENOSINE DEAMINASE-LIKE PROTEIN"/>
    <property type="match status" value="1"/>
</dbReference>
<dbReference type="Pfam" id="PF00962">
    <property type="entry name" value="A_deaminase"/>
    <property type="match status" value="1"/>
</dbReference>
<dbReference type="SUPFAM" id="SSF51556">
    <property type="entry name" value="Metallo-dependent hydrolases"/>
    <property type="match status" value="1"/>
</dbReference>
<keyword id="KW-0002">3D-structure</keyword>
<keyword id="KW-0963">Cytoplasm</keyword>
<keyword id="KW-0378">Hydrolase</keyword>
<keyword id="KW-0479">Metal-binding</keyword>
<keyword id="KW-0546">Nucleotide metabolism</keyword>
<keyword id="KW-1185">Reference proteome</keyword>
<keyword id="KW-0862">Zinc</keyword>
<protein>
    <recommendedName>
        <fullName evidence="5">N6-mAMP deaminase</fullName>
        <shortName evidence="5">AtMAPDA</shortName>
        <ecNumber evidence="2">3.5.4.-</ecNumber>
    </recommendedName>
    <alternativeName>
        <fullName evidence="6">Adenosine deaminase-like protein</fullName>
    </alternativeName>
</protein>
<sequence length="355" mass="39949">MEWIQSLPKIELHAHLNGSIRDSTLLELARVLGEKGVIVFADVEHVIQKNDRSLVEVFKLFDLIHKLTTDHKTVTRITREVVEDFALENVVYLELRTTPKRSDSIGMSKRSYMEAVIQGLRSVSEVDIDFVTASDSQKLHNAGDGIGRKKIYVRLLLSIDRRETTESAMETVKLALEMRDVGVVGIDLSGNPLVGEWSTFLPALQYAKDNDLHITLHCGEVPNPKEIQAMLDFKPHRIGHACFFKDEDWTKLKSFRIPVEICLTSNIVTKSISSIDIHHFADLYNAKHPLILCTDDFGVFSTSLSNEYALAVRSLGLSKSETFALARAAIDATFAEDEVKQQLRFIFDSASPEHV</sequence>
<feature type="chain" id="PRO_0000448573" description="N6-mAMP deaminase">
    <location>
        <begin position="1"/>
        <end position="355"/>
    </location>
</feature>
<feature type="active site" description="Proton donor" evidence="1">
    <location>
        <position position="220"/>
    </location>
</feature>
<feature type="binding site" evidence="3 4 8 11">
    <location>
        <position position="13"/>
    </location>
    <ligand>
        <name>Zn(2+)</name>
        <dbReference type="ChEBI" id="CHEBI:29105"/>
        <note>catalytic</note>
    </ligand>
</feature>
<feature type="binding site" evidence="3 9">
    <location>
        <position position="15"/>
    </location>
    <ligand>
        <name>N(6)-methyl-AMP</name>
        <dbReference type="ChEBI" id="CHEBI:144842"/>
    </ligand>
</feature>
<feature type="binding site" evidence="3 4 8 11">
    <location>
        <position position="15"/>
    </location>
    <ligand>
        <name>Zn(2+)</name>
        <dbReference type="ChEBI" id="CHEBI:29105"/>
        <note>catalytic</note>
    </ligand>
</feature>
<feature type="binding site" evidence="3 4 9 12">
    <location>
        <position position="17"/>
    </location>
    <ligand>
        <name>N(6)-methyl-AMP</name>
        <dbReference type="ChEBI" id="CHEBI:144842"/>
    </ligand>
</feature>
<feature type="binding site" evidence="3 4 9 12">
    <location>
        <position position="65"/>
    </location>
    <ligand>
        <name>N(6)-methyl-AMP</name>
        <dbReference type="ChEBI" id="CHEBI:144842"/>
    </ligand>
</feature>
<feature type="binding site" evidence="3 4 9 12">
    <location>
        <begin position="97"/>
        <end position="100"/>
    </location>
    <ligand>
        <name>N(6)-methyl-AMP</name>
        <dbReference type="ChEBI" id="CHEBI:144842"/>
    </ligand>
</feature>
<feature type="binding site" evidence="3 4 9 12">
    <location>
        <position position="160"/>
    </location>
    <ligand>
        <name>N(6)-methyl-AMP</name>
        <dbReference type="ChEBI" id="CHEBI:144842"/>
    </ligand>
</feature>
<feature type="binding site" evidence="3 4 9 12">
    <location>
        <position position="190"/>
    </location>
    <ligand>
        <name>N(6)-methyl-AMP</name>
        <dbReference type="ChEBI" id="CHEBI:144842"/>
    </ligand>
</feature>
<feature type="binding site" evidence="3 4 8 11">
    <location>
        <position position="217"/>
    </location>
    <ligand>
        <name>Zn(2+)</name>
        <dbReference type="ChEBI" id="CHEBI:29105"/>
        <note>catalytic</note>
    </ligand>
</feature>
<feature type="binding site" evidence="3 4 10 12">
    <location>
        <position position="220"/>
    </location>
    <ligand>
        <name>N(6)-methyl-AMP</name>
        <dbReference type="ChEBI" id="CHEBI:144842"/>
    </ligand>
</feature>
<feature type="binding site" evidence="3 10">
    <location>
        <position position="295"/>
    </location>
    <ligand>
        <name>N(6)-methyl-AMP</name>
        <dbReference type="ChEBI" id="CHEBI:144842"/>
    </ligand>
</feature>
<feature type="binding site" evidence="3 4 8 11">
    <location>
        <position position="295"/>
    </location>
    <ligand>
        <name>Zn(2+)</name>
        <dbReference type="ChEBI" id="CHEBI:29105"/>
        <note>catalytic</note>
    </ligand>
</feature>
<feature type="binding site" evidence="3 10">
    <location>
        <position position="296"/>
    </location>
    <ligand>
        <name>N(6)-methyl-AMP</name>
        <dbReference type="ChEBI" id="CHEBI:144842"/>
    </ligand>
</feature>
<feature type="site" description="Important for catalytic activity" evidence="1">
    <location>
        <position position="240"/>
    </location>
</feature>
<feature type="mutagenesis site" description="Abolishes catalytic activity." evidence="3">
    <original>H</original>
    <variation>A</variation>
    <location>
        <position position="15"/>
    </location>
</feature>
<feature type="mutagenesis site" description="Reduces catalytic efficiency 2-fold." evidence="3">
    <original>N</original>
    <variation>A</variation>
    <location>
        <position position="17"/>
    </location>
</feature>
<feature type="mutagenesis site" description="Reduces catalytic efficiency 20-fold." evidence="2">
    <original>V</original>
    <variation>F</variation>
    <location>
        <position position="57"/>
    </location>
</feature>
<feature type="mutagenesis site" description="Reduces catalytic efficiency 2-fold." evidence="3">
    <original>H</original>
    <variation>A</variation>
    <location>
        <position position="65"/>
    </location>
</feature>
<feature type="mutagenesis site" description="Reduces catalytic efficiency 3-fold." evidence="3">
    <original>T</original>
    <variation>A</variation>
    <location>
        <position position="97"/>
    </location>
</feature>
<feature type="mutagenesis site" description="Reduces catalytic efficiency 2-fold." evidence="3">
    <original>T</original>
    <variation>A</variation>
    <location>
        <position position="98"/>
    </location>
</feature>
<feature type="mutagenesis site" description="Reduces catalytic efficiency 3-fold." evidence="3">
    <original>K</original>
    <variation>A</variation>
    <location>
        <position position="100"/>
    </location>
</feature>
<feature type="mutagenesis site" description="Abolishes catalytic activity." evidence="3">
    <original>E</original>
    <variation>A</variation>
    <location>
        <position position="220"/>
    </location>
</feature>
<feature type="mutagenesis site" description="Abolishes catalytic activity." evidence="3 4">
    <original>D</original>
    <variation>A</variation>
    <variation>N</variation>
    <location>
        <position position="295"/>
    </location>
</feature>
<feature type="mutagenesis site" description="Abolishes catalytic activity." evidence="3">
    <original>D</original>
    <variation>A</variation>
    <location>
        <position position="296"/>
    </location>
</feature>
<feature type="helix" evidence="13">
    <location>
        <begin position="1"/>
        <end position="6"/>
    </location>
</feature>
<feature type="strand" evidence="13">
    <location>
        <begin position="9"/>
        <end position="15"/>
    </location>
</feature>
<feature type="helix" evidence="13">
    <location>
        <begin position="16"/>
        <end position="18"/>
    </location>
</feature>
<feature type="helix" evidence="13">
    <location>
        <begin position="22"/>
        <end position="34"/>
    </location>
</feature>
<feature type="helix" evidence="13">
    <location>
        <begin position="40"/>
        <end position="49"/>
    </location>
</feature>
<feature type="helix" evidence="13">
    <location>
        <begin position="54"/>
        <end position="68"/>
    </location>
</feature>
<feature type="helix" evidence="13">
    <location>
        <begin position="71"/>
        <end position="87"/>
    </location>
</feature>
<feature type="strand" evidence="13">
    <location>
        <begin position="90"/>
        <end position="97"/>
    </location>
</feature>
<feature type="helix" evidence="13">
    <location>
        <begin position="103"/>
        <end position="105"/>
    </location>
</feature>
<feature type="helix" evidence="13">
    <location>
        <begin position="109"/>
        <end position="121"/>
    </location>
</feature>
<feature type="strand" evidence="13">
    <location>
        <begin position="125"/>
        <end position="129"/>
    </location>
</feature>
<feature type="strand" evidence="13">
    <location>
        <begin position="150"/>
        <end position="160"/>
    </location>
</feature>
<feature type="helix" evidence="13">
    <location>
        <begin position="165"/>
        <end position="177"/>
    </location>
</feature>
<feature type="turn" evidence="13">
    <location>
        <begin position="178"/>
        <end position="180"/>
    </location>
</feature>
<feature type="strand" evidence="13">
    <location>
        <begin position="183"/>
        <end position="190"/>
    </location>
</feature>
<feature type="helix" evidence="13">
    <location>
        <begin position="197"/>
        <end position="209"/>
    </location>
</feature>
<feature type="strand" evidence="13">
    <location>
        <begin position="213"/>
        <end position="218"/>
    </location>
</feature>
<feature type="helix" evidence="13">
    <location>
        <begin position="224"/>
        <end position="233"/>
    </location>
</feature>
<feature type="strand" evidence="13">
    <location>
        <begin position="236"/>
        <end position="240"/>
    </location>
</feature>
<feature type="helix" evidence="13">
    <location>
        <begin position="246"/>
        <end position="255"/>
    </location>
</feature>
<feature type="strand" evidence="13">
    <location>
        <begin position="259"/>
        <end position="261"/>
    </location>
</feature>
<feature type="helix" evidence="13">
    <location>
        <begin position="263"/>
        <end position="268"/>
    </location>
</feature>
<feature type="strand" evidence="13">
    <location>
        <begin position="271"/>
        <end position="273"/>
    </location>
</feature>
<feature type="helix" evidence="13">
    <location>
        <begin position="275"/>
        <end position="277"/>
    </location>
</feature>
<feature type="helix" evidence="13">
    <location>
        <begin position="279"/>
        <end position="285"/>
    </location>
</feature>
<feature type="strand" evidence="13">
    <location>
        <begin position="290"/>
        <end position="292"/>
    </location>
</feature>
<feature type="turn" evidence="13">
    <location>
        <begin position="297"/>
        <end position="301"/>
    </location>
</feature>
<feature type="helix" evidence="13">
    <location>
        <begin position="304"/>
        <end position="315"/>
    </location>
</feature>
<feature type="helix" evidence="13">
    <location>
        <begin position="319"/>
        <end position="328"/>
    </location>
</feature>
<feature type="helix" evidence="13">
    <location>
        <begin position="329"/>
        <end position="332"/>
    </location>
</feature>
<feature type="helix" evidence="13">
    <location>
        <begin position="337"/>
        <end position="350"/>
    </location>
</feature>
<feature type="helix" evidence="13">
    <location>
        <begin position="351"/>
        <end position="353"/>
    </location>
</feature>
<gene>
    <name evidence="5" type="primary">MAPDA</name>
    <name evidence="5" type="synonym">ADAL</name>
    <name evidence="7" type="ordered locus">At4g04880</name>
</gene>
<organism>
    <name type="scientific">Arabidopsis thaliana</name>
    <name type="common">Mouse-ear cress</name>
    <dbReference type="NCBI Taxonomy" id="3702"/>
    <lineage>
        <taxon>Eukaryota</taxon>
        <taxon>Viridiplantae</taxon>
        <taxon>Streptophyta</taxon>
        <taxon>Embryophyta</taxon>
        <taxon>Tracheophyta</taxon>
        <taxon>Spermatophyta</taxon>
        <taxon>Magnoliopsida</taxon>
        <taxon>eudicotyledons</taxon>
        <taxon>Gunneridae</taxon>
        <taxon>Pentapetalae</taxon>
        <taxon>rosids</taxon>
        <taxon>malvids</taxon>
        <taxon>Brassicales</taxon>
        <taxon>Brassicaceae</taxon>
        <taxon>Camelineae</taxon>
        <taxon>Arabidopsis</taxon>
    </lineage>
</organism>
<comment type="function">
    <text evidence="2 3 4">Catalyzes the hydrolysis of the free cytosolic methylated adenosine nucleotide N(6)-methyl-AMP (N6-mAMP) to produce inositol monophosphate (IMP) and methylamine (PubMed:29884623, PubMed:30721978, PubMed:31318636). Is required for the catabolism of cytosolic N6-mAMP, which is derived from the degradation of mRNA containing N6-methylated adenine (m6A) (PubMed:29884623). Does not possess deaminase activity toward adenosine, AMP, N6-methyladenosine, or N6-mATP in vitro (PubMed:29884623).</text>
</comment>
<comment type="catalytic activity">
    <reaction evidence="2">
        <text>N(6)-methyl-AMP + H2O + H(+) = IMP + methylamine</text>
        <dbReference type="Rhea" id="RHEA:16001"/>
        <dbReference type="ChEBI" id="CHEBI:15377"/>
        <dbReference type="ChEBI" id="CHEBI:15378"/>
        <dbReference type="ChEBI" id="CHEBI:58053"/>
        <dbReference type="ChEBI" id="CHEBI:59338"/>
        <dbReference type="ChEBI" id="CHEBI:144842"/>
    </reaction>
    <physiologicalReaction direction="left-to-right" evidence="2">
        <dbReference type="Rhea" id="RHEA:16002"/>
    </physiologicalReaction>
</comment>
<comment type="cofactor">
    <cofactor evidence="2 3 4">
        <name>Zn(2+)</name>
        <dbReference type="ChEBI" id="CHEBI:29105"/>
    </cofactor>
    <text evidence="3 4">Binds 1 zinc ion per subunit.</text>
</comment>
<comment type="biophysicochemical properties">
    <kinetics>
        <KM evidence="2">3.17 uM for N(6)-methyl-AMP</KM>
        <text evidence="2">kcat is 0.21 sec(-1) with N(6)-methyl-AMP as substrate.</text>
    </kinetics>
</comment>
<comment type="subunit">
    <text evidence="3">Monomer.</text>
</comment>
<comment type="subcellular location">
    <subcellularLocation>
        <location evidence="2">Cytoplasm</location>
        <location evidence="2">Cytosol</location>
    </subcellularLocation>
</comment>
<comment type="disruption phenotype">
    <text evidence="2">Slight reduction of root growth (PubMed:29884623). 10-fold increase of the ratio N(6)-methyl-AMP/AMP in leaf cells (PubMed:29884623).</text>
</comment>
<comment type="similarity">
    <text evidence="6">Belongs to the metallo-dependent hydrolases superfamily. Adenosine and AMP deaminases family.</text>
</comment>
<comment type="sequence caution" evidence="6">
    <conflict type="erroneous gene model prediction">
        <sequence resource="EMBL-CDS" id="CAB80853"/>
    </conflict>
</comment>
<evidence type="ECO:0000250" key="1">
    <source>
        <dbReference type="UniProtKB" id="P03958"/>
    </source>
</evidence>
<evidence type="ECO:0000269" key="2">
    <source>
    </source>
</evidence>
<evidence type="ECO:0000269" key="3">
    <source>
    </source>
</evidence>
<evidence type="ECO:0000269" key="4">
    <source>
    </source>
</evidence>
<evidence type="ECO:0000303" key="5">
    <source>
    </source>
</evidence>
<evidence type="ECO:0000305" key="6"/>
<evidence type="ECO:0000312" key="7">
    <source>
        <dbReference type="Araport" id="AT4G04880"/>
    </source>
</evidence>
<evidence type="ECO:0007744" key="8">
    <source>
        <dbReference type="PDB" id="6IJM"/>
    </source>
</evidence>
<evidence type="ECO:0007744" key="9">
    <source>
        <dbReference type="PDB" id="6IJN"/>
    </source>
</evidence>
<evidence type="ECO:0007744" key="10">
    <source>
        <dbReference type="PDB" id="6IJP"/>
    </source>
</evidence>
<evidence type="ECO:0007744" key="11">
    <source>
        <dbReference type="PDB" id="6IV5"/>
    </source>
</evidence>
<evidence type="ECO:0007744" key="12">
    <source>
        <dbReference type="PDB" id="6J4T"/>
    </source>
</evidence>
<evidence type="ECO:0007829" key="13">
    <source>
        <dbReference type="PDB" id="6IJN"/>
    </source>
</evidence>
<name>ADAL_ARATH</name>
<accession>Q8LPL7</accession>
<accession>Q9M0Z1</accession>
<proteinExistence type="evidence at protein level"/>